<reference key="1">
    <citation type="journal article" date="2000" name="Nature">
        <title>Sequence and analysis of chromosome 3 of the plant Arabidopsis thaliana.</title>
        <authorList>
            <person name="Salanoubat M."/>
            <person name="Lemcke K."/>
            <person name="Rieger M."/>
            <person name="Ansorge W."/>
            <person name="Unseld M."/>
            <person name="Fartmann B."/>
            <person name="Valle G."/>
            <person name="Bloecker H."/>
            <person name="Perez-Alonso M."/>
            <person name="Obermaier B."/>
            <person name="Delseny M."/>
            <person name="Boutry M."/>
            <person name="Grivell L.A."/>
            <person name="Mache R."/>
            <person name="Puigdomenech P."/>
            <person name="De Simone V."/>
            <person name="Choisne N."/>
            <person name="Artiguenave F."/>
            <person name="Robert C."/>
            <person name="Brottier P."/>
            <person name="Wincker P."/>
            <person name="Cattolico L."/>
            <person name="Weissenbach J."/>
            <person name="Saurin W."/>
            <person name="Quetier F."/>
            <person name="Schaefer M."/>
            <person name="Mueller-Auer S."/>
            <person name="Gabel C."/>
            <person name="Fuchs M."/>
            <person name="Benes V."/>
            <person name="Wurmbach E."/>
            <person name="Drzonek H."/>
            <person name="Erfle H."/>
            <person name="Jordan N."/>
            <person name="Bangert S."/>
            <person name="Wiedelmann R."/>
            <person name="Kranz H."/>
            <person name="Voss H."/>
            <person name="Holland R."/>
            <person name="Brandt P."/>
            <person name="Nyakatura G."/>
            <person name="Vezzi A."/>
            <person name="D'Angelo M."/>
            <person name="Pallavicini A."/>
            <person name="Toppo S."/>
            <person name="Simionati B."/>
            <person name="Conrad A."/>
            <person name="Hornischer K."/>
            <person name="Kauer G."/>
            <person name="Loehnert T.-H."/>
            <person name="Nordsiek G."/>
            <person name="Reichelt J."/>
            <person name="Scharfe M."/>
            <person name="Schoen O."/>
            <person name="Bargues M."/>
            <person name="Terol J."/>
            <person name="Climent J."/>
            <person name="Navarro P."/>
            <person name="Collado C."/>
            <person name="Perez-Perez A."/>
            <person name="Ottenwaelder B."/>
            <person name="Duchemin D."/>
            <person name="Cooke R."/>
            <person name="Laudie M."/>
            <person name="Berger-Llauro C."/>
            <person name="Purnelle B."/>
            <person name="Masuy D."/>
            <person name="de Haan M."/>
            <person name="Maarse A.C."/>
            <person name="Alcaraz J.-P."/>
            <person name="Cottet A."/>
            <person name="Casacuberta E."/>
            <person name="Monfort A."/>
            <person name="Argiriou A."/>
            <person name="Flores M."/>
            <person name="Liguori R."/>
            <person name="Vitale D."/>
            <person name="Mannhaupt G."/>
            <person name="Haase D."/>
            <person name="Schoof H."/>
            <person name="Rudd S."/>
            <person name="Zaccaria P."/>
            <person name="Mewes H.-W."/>
            <person name="Mayer K.F.X."/>
            <person name="Kaul S."/>
            <person name="Town C.D."/>
            <person name="Koo H.L."/>
            <person name="Tallon L.J."/>
            <person name="Jenkins J."/>
            <person name="Rooney T."/>
            <person name="Rizzo M."/>
            <person name="Walts A."/>
            <person name="Utterback T."/>
            <person name="Fujii C.Y."/>
            <person name="Shea T.P."/>
            <person name="Creasy T.H."/>
            <person name="Haas B."/>
            <person name="Maiti R."/>
            <person name="Wu D."/>
            <person name="Peterson J."/>
            <person name="Van Aken S."/>
            <person name="Pai G."/>
            <person name="Militscher J."/>
            <person name="Sellers P."/>
            <person name="Gill J.E."/>
            <person name="Feldblyum T.V."/>
            <person name="Preuss D."/>
            <person name="Lin X."/>
            <person name="Nierman W.C."/>
            <person name="Salzberg S.L."/>
            <person name="White O."/>
            <person name="Venter J.C."/>
            <person name="Fraser C.M."/>
            <person name="Kaneko T."/>
            <person name="Nakamura Y."/>
            <person name="Sato S."/>
            <person name="Kato T."/>
            <person name="Asamizu E."/>
            <person name="Sasamoto S."/>
            <person name="Kimura T."/>
            <person name="Idesawa K."/>
            <person name="Kawashima K."/>
            <person name="Kishida Y."/>
            <person name="Kiyokawa C."/>
            <person name="Kohara M."/>
            <person name="Matsumoto M."/>
            <person name="Matsuno A."/>
            <person name="Muraki A."/>
            <person name="Nakayama S."/>
            <person name="Nakazaki N."/>
            <person name="Shinpo S."/>
            <person name="Takeuchi C."/>
            <person name="Wada T."/>
            <person name="Watanabe A."/>
            <person name="Yamada M."/>
            <person name="Yasuda M."/>
            <person name="Tabata S."/>
        </authorList>
    </citation>
    <scope>NUCLEOTIDE SEQUENCE [LARGE SCALE GENOMIC DNA]</scope>
    <source>
        <strain>cv. Columbia</strain>
    </source>
</reference>
<reference key="2">
    <citation type="journal article" date="2017" name="Plant J.">
        <title>Araport11: a complete reannotation of the Arabidopsis thaliana reference genome.</title>
        <authorList>
            <person name="Cheng C.Y."/>
            <person name="Krishnakumar V."/>
            <person name="Chan A.P."/>
            <person name="Thibaud-Nissen F."/>
            <person name="Schobel S."/>
            <person name="Town C.D."/>
        </authorList>
    </citation>
    <scope>GENOME REANNOTATION</scope>
    <source>
        <strain>cv. Columbia</strain>
    </source>
</reference>
<reference key="3">
    <citation type="journal article" date="2003" name="Science">
        <title>Empirical analysis of transcriptional activity in the Arabidopsis genome.</title>
        <authorList>
            <person name="Yamada K."/>
            <person name="Lim J."/>
            <person name="Dale J.M."/>
            <person name="Chen H."/>
            <person name="Shinn P."/>
            <person name="Palm C.J."/>
            <person name="Southwick A.M."/>
            <person name="Wu H.C."/>
            <person name="Kim C.J."/>
            <person name="Nguyen M."/>
            <person name="Pham P.K."/>
            <person name="Cheuk R.F."/>
            <person name="Karlin-Newmann G."/>
            <person name="Liu S.X."/>
            <person name="Lam B."/>
            <person name="Sakano H."/>
            <person name="Wu T."/>
            <person name="Yu G."/>
            <person name="Miranda M."/>
            <person name="Quach H.L."/>
            <person name="Tripp M."/>
            <person name="Chang C.H."/>
            <person name="Lee J.M."/>
            <person name="Toriumi M.J."/>
            <person name="Chan M.M."/>
            <person name="Tang C.C."/>
            <person name="Onodera C.S."/>
            <person name="Deng J.M."/>
            <person name="Akiyama K."/>
            <person name="Ansari Y."/>
            <person name="Arakawa T."/>
            <person name="Banh J."/>
            <person name="Banno F."/>
            <person name="Bowser L."/>
            <person name="Brooks S.Y."/>
            <person name="Carninci P."/>
            <person name="Chao Q."/>
            <person name="Choy N."/>
            <person name="Enju A."/>
            <person name="Goldsmith A.D."/>
            <person name="Gurjal M."/>
            <person name="Hansen N.F."/>
            <person name="Hayashizaki Y."/>
            <person name="Johnson-Hopson C."/>
            <person name="Hsuan V.W."/>
            <person name="Iida K."/>
            <person name="Karnes M."/>
            <person name="Khan S."/>
            <person name="Koesema E."/>
            <person name="Ishida J."/>
            <person name="Jiang P.X."/>
            <person name="Jones T."/>
            <person name="Kawai J."/>
            <person name="Kamiya A."/>
            <person name="Meyers C."/>
            <person name="Nakajima M."/>
            <person name="Narusaka M."/>
            <person name="Seki M."/>
            <person name="Sakurai T."/>
            <person name="Satou M."/>
            <person name="Tamse R."/>
            <person name="Vaysberg M."/>
            <person name="Wallender E.K."/>
            <person name="Wong C."/>
            <person name="Yamamura Y."/>
            <person name="Yuan S."/>
            <person name="Shinozaki K."/>
            <person name="Davis R.W."/>
            <person name="Theologis A."/>
            <person name="Ecker J.R."/>
        </authorList>
    </citation>
    <scope>NUCLEOTIDE SEQUENCE [LARGE SCALE MRNA]</scope>
    <source>
        <strain>cv. Columbia</strain>
    </source>
</reference>
<reference key="4">
    <citation type="journal article" date="2007" name="Cell Res.">
        <title>Arabidopsis AtBECLIN 1/AtAtg6/AtVps30 is essential for pollen germination and plant development.</title>
        <authorList>
            <person name="Qin G."/>
            <person name="Ma Z."/>
            <person name="Zhang L."/>
            <person name="Xing S."/>
            <person name="Hou X."/>
            <person name="Deng J."/>
            <person name="Liu J."/>
            <person name="Chen Z."/>
            <person name="Qu L.J."/>
            <person name="Gu H."/>
        </authorList>
    </citation>
    <scope>FUNCTION</scope>
    <scope>TISSUE SPECIFICITY</scope>
    <scope>DISRUPTION PHENOTYPE</scope>
</reference>
<reference key="5">
    <citation type="journal article" date="2007" name="Plant Physiol.">
        <title>An Arabidopsis homolog of yeast ATG6/VPS30 is essential for pollen germination.</title>
        <authorList>
            <person name="Fujiki Y."/>
            <person name="Yoshimoto K."/>
            <person name="Ohsumi Y."/>
        </authorList>
    </citation>
    <scope>FUNCTION</scope>
    <scope>SUBCELLULAR LOCATION</scope>
    <scope>TISSUE SPECIFICITY</scope>
    <scope>DISRUPTION PHENOTYPE</scope>
</reference>
<reference key="6">
    <citation type="journal article" date="2008" name="Autophagy">
        <title>Arabidopsis ATG6 is required to limit the pathogen-associated cell death response.</title>
        <authorList>
            <person name="Patel S."/>
            <person name="Dinesh-Kumar S.P."/>
        </authorList>
    </citation>
    <scope>FUNCTION</scope>
    <scope>INDUCTION BY PATHOGEN INFECTION</scope>
</reference>
<reference key="7">
    <citation type="journal article" date="2008" name="Autophagy">
        <title>Autophagy protein 6 (ATG6) is required for pollen germination in Arabidopsis thaliana.</title>
        <authorList>
            <person name="Harrison-Lowe N.J."/>
            <person name="Olsen L.J."/>
        </authorList>
    </citation>
    <scope>FUNCTION</scope>
    <scope>TISSUE SPECIFICITY</scope>
    <scope>DISRUPTION PHENOTYPE</scope>
</reference>
<reference key="8">
    <citation type="journal article" date="2010" name="Plant Biotechnol. J.">
        <title>BECLIN1 from Arabidopsis thaliana under the generic control of regulated expression systems, a strategy for developing male sterile plants.</title>
        <authorList>
            <person name="Singh S.P."/>
            <person name="Pandey T."/>
            <person name="Srivastava R."/>
            <person name="Verma P.C."/>
            <person name="Singh P.K."/>
            <person name="Tuli R."/>
            <person name="Sawant S.V."/>
        </authorList>
    </citation>
    <scope>BIOTECHNOLOGY</scope>
</reference>
<reference key="9">
    <citation type="journal article" date="2011" name="Plant J.">
        <title>A critical role of autophagy in plant resistance to necrotrophic fungal pathogens.</title>
        <authorList>
            <person name="Lai Z."/>
            <person name="Wang F."/>
            <person name="Zheng Z."/>
            <person name="Fan B."/>
            <person name="Chen Z."/>
        </authorList>
    </citation>
    <scope>INDUCTION BY FUNGAL PATHOGEN</scope>
</reference>
<reference key="10">
    <citation type="journal article" date="2015" name="Autophagy">
        <title>Disruption of microtubules in plants suppresses macroautophagy and triggers starch excess-associated chloroplast autophagy.</title>
        <authorList>
            <person name="Wang Y."/>
            <person name="Zheng X."/>
            <person name="Yu B."/>
            <person name="Han S."/>
            <person name="Guo J."/>
            <person name="Tang H."/>
            <person name="Yu A.Y."/>
            <person name="Deng H."/>
            <person name="Hong Y."/>
            <person name="Liu Y."/>
        </authorList>
    </citation>
    <scope>FUNCTION</scope>
    <scope>INTERACTION WITH TUBB8/TUB8</scope>
    <scope>SUBCELLULAR LOCATION</scope>
</reference>
<reference key="11">
    <citation type="journal article" date="2015" name="Proc. Natl. Acad. Sci. U.S.A.">
        <title>Dual roles of an Arabidopsis ESCRT component FREE1 in regulating vacuolar protein transport and autophagic degradation.</title>
        <authorList>
            <person name="Gao C."/>
            <person name="Zhuang X."/>
            <person name="Cui Y."/>
            <person name="Fu X."/>
            <person name="He Y."/>
            <person name="Zhao Q."/>
            <person name="Zeng Y."/>
            <person name="Shen J."/>
            <person name="Luo M."/>
            <person name="Jiang L."/>
        </authorList>
    </citation>
    <scope>IDENTIFICATION IN A PI3K COMPLEX</scope>
</reference>
<reference key="12">
    <citation type="journal article" date="2017" name="Plant Cell">
        <title>TRAF family proteins regulate autophagy dynamics by modulating AUTOPHAGY PROTEIN6 stability in Arabidopsis.</title>
        <authorList>
            <person name="Qi H."/>
            <person name="Xia F.N."/>
            <person name="Xie L.J."/>
            <person name="Yu L.J."/>
            <person name="Chen Q.F."/>
            <person name="Zhuang X.H."/>
            <person name="Wang Q."/>
            <person name="Li F."/>
            <person name="Jiang L."/>
            <person name="Xie Q."/>
            <person name="Xiao S."/>
        </authorList>
    </citation>
    <scope>INTERACTION WITH SINAT1; SINAT2; SINAT5; SINAT6; TRAF1A AND TRAF1B</scope>
    <scope>UBIQUITINATION</scope>
    <scope>DEGRADATION</scope>
</reference>
<reference key="13">
    <citation type="journal article" date="2018" name="New Phytol.">
        <title>The Arabidopsis USL1 controls multiple aspects of development by affecting late endosome morphology.</title>
        <authorList>
            <person name="Yuan R."/>
            <person name="Lan J."/>
            <person name="Fang Y."/>
            <person name="Yu H."/>
            <person name="Zhang J."/>
            <person name="Huang J."/>
            <person name="Qin G."/>
        </authorList>
    </citation>
    <scope>SUBUNIT</scope>
    <scope>INTERACTION WITH VPS38/USL1</scope>
    <source>
        <strain>cv. Columbia</strain>
    </source>
</reference>
<reference key="14">
    <citation type="journal article" date="2018" name="Plant Physiol.">
        <title>Vacuolar trafficking protein VPS38 is dispensable for autophagy.</title>
        <authorList>
            <person name="Lee H.N."/>
            <person name="Zarza X."/>
            <person name="Kim J.H."/>
            <person name="Yoon M.J."/>
            <person name="Kim S.-H."/>
            <person name="Lee J.-H."/>
            <person name="Paris N."/>
            <person name="Munnik T."/>
            <person name="Otegui M.S."/>
            <person name="Chung T."/>
        </authorList>
    </citation>
    <scope>INTERACTION WITH VPS38/USL1</scope>
    <source>
        <strain>cv. Columbia</strain>
    </source>
</reference>
<name>BECN1_ARATH</name>
<evidence type="ECO:0000255" key="1"/>
<evidence type="ECO:0000256" key="2">
    <source>
        <dbReference type="SAM" id="MobiDB-lite"/>
    </source>
</evidence>
<evidence type="ECO:0000269" key="3">
    <source>
    </source>
</evidence>
<evidence type="ECO:0000269" key="4">
    <source>
    </source>
</evidence>
<evidence type="ECO:0000269" key="5">
    <source>
    </source>
</evidence>
<evidence type="ECO:0000269" key="6">
    <source>
    </source>
</evidence>
<evidence type="ECO:0000269" key="7">
    <source>
    </source>
</evidence>
<evidence type="ECO:0000269" key="8">
    <source>
    </source>
</evidence>
<evidence type="ECO:0000269" key="9">
    <source>
    </source>
</evidence>
<evidence type="ECO:0000269" key="10">
    <source>
    </source>
</evidence>
<evidence type="ECO:0000269" key="11">
    <source>
    </source>
</evidence>
<evidence type="ECO:0000269" key="12">
    <source>
    </source>
</evidence>
<evidence type="ECO:0000269" key="13">
    <source>
    </source>
</evidence>
<evidence type="ECO:0000303" key="14">
    <source>
    </source>
</evidence>
<evidence type="ECO:0000303" key="15">
    <source>
    </source>
</evidence>
<evidence type="ECO:0000305" key="16"/>
<evidence type="ECO:0000312" key="17">
    <source>
        <dbReference type="Araport" id="AT3G61710"/>
    </source>
</evidence>
<evidence type="ECO:0000312" key="18">
    <source>
        <dbReference type="EMBL" id="CAB71101.1"/>
    </source>
</evidence>
<dbReference type="EMBL" id="AL132959">
    <property type="protein sequence ID" value="CAB71101.1"/>
    <property type="status" value="ALT_SEQ"/>
    <property type="molecule type" value="Genomic_DNA"/>
</dbReference>
<dbReference type="EMBL" id="CP002686">
    <property type="protein sequence ID" value="AEE80244.1"/>
    <property type="molecule type" value="Genomic_DNA"/>
</dbReference>
<dbReference type="EMBL" id="CP002686">
    <property type="protein sequence ID" value="AEE80245.1"/>
    <property type="molecule type" value="Genomic_DNA"/>
</dbReference>
<dbReference type="EMBL" id="CP002686">
    <property type="protein sequence ID" value="AEE80246.1"/>
    <property type="molecule type" value="Genomic_DNA"/>
</dbReference>
<dbReference type="EMBL" id="AY039613">
    <property type="protein sequence ID" value="AAK62668.1"/>
    <property type="molecule type" value="mRNA"/>
</dbReference>
<dbReference type="EMBL" id="BT000508">
    <property type="protein sequence ID" value="AAN18077.1"/>
    <property type="molecule type" value="mRNA"/>
</dbReference>
<dbReference type="PIR" id="T47963">
    <property type="entry name" value="T47963"/>
</dbReference>
<dbReference type="RefSeq" id="NP_001030914.1">
    <molecule id="Q9M367-3"/>
    <property type="nucleotide sequence ID" value="NM_001035837.1"/>
</dbReference>
<dbReference type="RefSeq" id="NP_567116.1">
    <molecule id="Q9M367-1"/>
    <property type="nucleotide sequence ID" value="NM_116036.4"/>
</dbReference>
<dbReference type="RefSeq" id="NP_974475.1">
    <molecule id="Q9M367-2"/>
    <property type="nucleotide sequence ID" value="NM_202746.2"/>
</dbReference>
<dbReference type="SMR" id="Q9M367"/>
<dbReference type="BioGRID" id="10658">
    <property type="interactions" value="4"/>
</dbReference>
<dbReference type="FunCoup" id="Q9M367">
    <property type="interactions" value="3419"/>
</dbReference>
<dbReference type="IntAct" id="Q9M367">
    <property type="interactions" value="1"/>
</dbReference>
<dbReference type="STRING" id="3702.Q9M367"/>
<dbReference type="TCDB" id="9.A.15.3.1">
    <property type="family name" value="the autophagy-related phagophore-formation transporter (apt) family"/>
</dbReference>
<dbReference type="iPTMnet" id="Q9M367"/>
<dbReference type="PaxDb" id="3702-AT3G61710.1"/>
<dbReference type="ProteomicsDB" id="241133">
    <molecule id="Q9M367-1"/>
</dbReference>
<dbReference type="EnsemblPlants" id="AT3G61710.1">
    <molecule id="Q9M367-1"/>
    <property type="protein sequence ID" value="AT3G61710.1"/>
    <property type="gene ID" value="AT3G61710"/>
</dbReference>
<dbReference type="EnsemblPlants" id="AT3G61710.2">
    <molecule id="Q9M367-2"/>
    <property type="protein sequence ID" value="AT3G61710.2"/>
    <property type="gene ID" value="AT3G61710"/>
</dbReference>
<dbReference type="EnsemblPlants" id="AT3G61710.3">
    <molecule id="Q9M367-3"/>
    <property type="protein sequence ID" value="AT3G61710.3"/>
    <property type="gene ID" value="AT3G61710"/>
</dbReference>
<dbReference type="GeneID" id="825344"/>
<dbReference type="Gramene" id="AT3G61710.1">
    <molecule id="Q9M367-1"/>
    <property type="protein sequence ID" value="AT3G61710.1"/>
    <property type="gene ID" value="AT3G61710"/>
</dbReference>
<dbReference type="Gramene" id="AT3G61710.2">
    <molecule id="Q9M367-2"/>
    <property type="protein sequence ID" value="AT3G61710.2"/>
    <property type="gene ID" value="AT3G61710"/>
</dbReference>
<dbReference type="Gramene" id="AT3G61710.3">
    <molecule id="Q9M367-3"/>
    <property type="protein sequence ID" value="AT3G61710.3"/>
    <property type="gene ID" value="AT3G61710"/>
</dbReference>
<dbReference type="KEGG" id="ath:AT3G61710"/>
<dbReference type="Araport" id="AT3G61710"/>
<dbReference type="TAIR" id="AT3G61710">
    <property type="gene designation" value="ATG6"/>
</dbReference>
<dbReference type="eggNOG" id="KOG2751">
    <property type="taxonomic scope" value="Eukaryota"/>
</dbReference>
<dbReference type="InParanoid" id="Q9M367"/>
<dbReference type="OMA" id="EWDVYKA"/>
<dbReference type="OrthoDB" id="20368at2759"/>
<dbReference type="PhylomeDB" id="Q9M367"/>
<dbReference type="PRO" id="PR:Q9M367"/>
<dbReference type="Proteomes" id="UP000006548">
    <property type="component" value="Chromosome 3"/>
</dbReference>
<dbReference type="ExpressionAtlas" id="Q9M367">
    <property type="expression patterns" value="baseline and differential"/>
</dbReference>
<dbReference type="GO" id="GO:0005856">
    <property type="term" value="C:cytoskeleton"/>
    <property type="evidence" value="ECO:0007669"/>
    <property type="project" value="UniProtKB-SubCell"/>
</dbReference>
<dbReference type="GO" id="GO:0000407">
    <property type="term" value="C:phagophore assembly site"/>
    <property type="evidence" value="ECO:0000314"/>
    <property type="project" value="UniProtKB"/>
</dbReference>
<dbReference type="GO" id="GO:0005942">
    <property type="term" value="C:phosphatidylinositol 3-kinase complex"/>
    <property type="evidence" value="ECO:0000314"/>
    <property type="project" value="UniProtKB"/>
</dbReference>
<dbReference type="GO" id="GO:0000045">
    <property type="term" value="P:autophagosome assembly"/>
    <property type="evidence" value="ECO:0000316"/>
    <property type="project" value="UniProtKB"/>
</dbReference>
<dbReference type="GO" id="GO:0050832">
    <property type="term" value="P:defense response to fungus"/>
    <property type="evidence" value="ECO:0000270"/>
    <property type="project" value="TAIR"/>
</dbReference>
<dbReference type="GO" id="GO:0009846">
    <property type="term" value="P:pollen germination"/>
    <property type="evidence" value="ECO:0000315"/>
    <property type="project" value="TAIR"/>
</dbReference>
<dbReference type="GO" id="GO:0006623">
    <property type="term" value="P:protein targeting to vacuole"/>
    <property type="evidence" value="ECO:0000316"/>
    <property type="project" value="UniProtKB"/>
</dbReference>
<dbReference type="FunFam" id="1.10.418.40:FF:000002">
    <property type="entry name" value="Beclin 1 protein"/>
    <property type="match status" value="1"/>
</dbReference>
<dbReference type="Gene3D" id="6.10.250.3110">
    <property type="match status" value="1"/>
</dbReference>
<dbReference type="Gene3D" id="1.10.418.40">
    <property type="entry name" value="Autophagy protein 6/Beclin 1"/>
    <property type="match status" value="1"/>
</dbReference>
<dbReference type="InterPro" id="IPR007243">
    <property type="entry name" value="Atg6/Beclin"/>
</dbReference>
<dbReference type="InterPro" id="IPR038274">
    <property type="entry name" value="Atg6/Beclin_C_sf"/>
</dbReference>
<dbReference type="InterPro" id="IPR041691">
    <property type="entry name" value="Atg6/beclin_CC"/>
</dbReference>
<dbReference type="InterPro" id="IPR040455">
    <property type="entry name" value="Atg6_BARA"/>
</dbReference>
<dbReference type="PANTHER" id="PTHR12768">
    <property type="entry name" value="BECLIN 1"/>
    <property type="match status" value="1"/>
</dbReference>
<dbReference type="PANTHER" id="PTHR12768:SF4">
    <property type="entry name" value="BECLIN-1"/>
    <property type="match status" value="1"/>
</dbReference>
<dbReference type="Pfam" id="PF04111">
    <property type="entry name" value="APG6"/>
    <property type="match status" value="1"/>
</dbReference>
<dbReference type="Pfam" id="PF17675">
    <property type="entry name" value="APG6_N"/>
    <property type="match status" value="1"/>
</dbReference>
<organism>
    <name type="scientific">Arabidopsis thaliana</name>
    <name type="common">Mouse-ear cress</name>
    <dbReference type="NCBI Taxonomy" id="3702"/>
    <lineage>
        <taxon>Eukaryota</taxon>
        <taxon>Viridiplantae</taxon>
        <taxon>Streptophyta</taxon>
        <taxon>Embryophyta</taxon>
        <taxon>Tracheophyta</taxon>
        <taxon>Spermatophyta</taxon>
        <taxon>Magnoliopsida</taxon>
        <taxon>eudicotyledons</taxon>
        <taxon>Gunneridae</taxon>
        <taxon>Pentapetalae</taxon>
        <taxon>rosids</taxon>
        <taxon>malvids</taxon>
        <taxon>Brassicales</taxon>
        <taxon>Brassicaceae</taxon>
        <taxon>Camelineae</taxon>
        <taxon>Arabidopsis</taxon>
    </lineage>
</organism>
<accession>Q9M367</accession>
<accession>A8MRV3</accession>
<accession>F4JFF7</accession>
<accession>Q94BW8</accession>
<proteinExistence type="evidence at protein level"/>
<comment type="function">
    <text evidence="3 4 5 6 10">Required for normal plant development (PubMed:17339883, PubMed:17932459, PubMed:18227644). Required for pollen germination (PubMed:17259285, PubMed:17339883, PubMed:18227644). Required for autophagic activity. Required to limit the pathogen-associated cell death response (PubMed:17932459). May be involved in vacuolar protein sorting (PubMed:17259285). Binds to microtubules. May facilitate efficient recruitment of other ATG proteins to assemble scaffolds for autophagosome biogenesis (PubMed:26566764).</text>
</comment>
<comment type="subunit">
    <text evidence="9 10 11 12 13">Component of a phosphatidylinositol 3-kinase (PI3K) complex composed of ATG6, SH3P2 and FREE1 (PubMed:25624505). Interacts with SINAT1, SINAT2, SINAT5, SINAT6, TRAF1A and TRAF1B (PubMed:28351989). Interacts with TUBB8/TUB8 (PubMed:26566764). Component of a complex made of VPS38/USL1 and PI3K main subunits such as VPS15, ATG6/VPS30 and VPS34 (PubMed:29897620). Binds directly to VPS38/USL1 (PubMed:29184027, PubMed:29897620).</text>
</comment>
<comment type="subcellular location">
    <subcellularLocation>
        <location evidence="3">Cytoplasm</location>
    </subcellularLocation>
    <subcellularLocation>
        <location evidence="10">Cytoplasm</location>
        <location evidence="10">Cytoskeleton</location>
    </subcellularLocation>
    <text evidence="3 10">Colocalizes with ATG8I in punctuate structures (PubMed:17259285). Localizes in punctuate structures and colocalizes with microtubules (PubMed:26566764).</text>
</comment>
<comment type="alternative products">
    <event type="alternative splicing"/>
    <isoform>
        <id>Q9M367-1</id>
        <name>1</name>
        <sequence type="displayed"/>
    </isoform>
    <isoform>
        <id>Q9M367-2</id>
        <name>2</name>
        <sequence type="described" ref="VSP_057914 VSP_057915"/>
    </isoform>
    <isoform>
        <id>Q9M367-3</id>
        <name>3</name>
        <sequence type="described" ref="VSP_057913 VSP_057914 VSP_057915"/>
    </isoform>
</comment>
<comment type="tissue specificity">
    <text evidence="3 4 6">Highly expressed in mature pollen grains (PubMed:17339883). Expressed in roots, leaves, stems, flowers and siliques (PubMed:17259285, PubMed:18227644).</text>
</comment>
<comment type="induction">
    <text evidence="5 8">Induced by infection with the bacterial pathogen Pseudomonas syringae pv tomato strain DC3000 (PubMed:17932459). Induced by infection with the fungal necrotrophic pathogen Botrytis cinerea (PubMed:21395886).</text>
</comment>
<comment type="PTM">
    <text evidence="11">Ubiquitinated (PubMed:28351989). The interaction with SINAT1 or SINAT2, and the presence of TRAF1A/MUSE14 and TRAF1B/MUSE13, mediates its proteasome-dependent degradation (PubMed:28351989).</text>
</comment>
<comment type="disruption phenotype">
    <text evidence="3 4 6">Male sterility due to pollen germination defect.</text>
</comment>
<comment type="biotechnology">
    <text evidence="7">Can be used to induced male sterility when expressed in anther tapetum. Development of male sterile lines is important for commercial hybrid seed production.</text>
</comment>
<comment type="miscellaneous">
    <text evidence="5">Plants silencing ATG6 exhibit impaired autophagic activity and accelerated senescence.</text>
</comment>
<comment type="similarity">
    <text evidence="16">Belongs to the beclin family.</text>
</comment>
<comment type="sequence caution" evidence="16">
    <conflict type="erroneous gene model prediction">
        <sequence resource="EMBL-CDS" id="CAB71101"/>
    </conflict>
</comment>
<keyword id="KW-0025">Alternative splicing</keyword>
<keyword id="KW-0175">Coiled coil</keyword>
<keyword id="KW-0963">Cytoplasm</keyword>
<keyword id="KW-0206">Cytoskeleton</keyword>
<keyword id="KW-1185">Reference proteome</keyword>
<keyword id="KW-0832">Ubl conjugation</keyword>
<gene>
    <name evidence="15" type="primary">ATG6</name>
    <name evidence="14" type="synonym">VPS30</name>
    <name evidence="17" type="ordered locus">At3g61710</name>
    <name evidence="18" type="ORF">F15G16.100</name>
</gene>
<sequence length="517" mass="58504">MRKEEIPDKSRTIPIDPNLPKWVCQNCHHSLTIVGVDSYAGKFFNDPPPSATQGSSIHGANSVLGSTRMDNSFVVLPRHKPPQSQGIPPRPRGASSPQPDATQSGKAMEESFVVVYKSEPVSDSGGSHNLSLEVGQNGPLHSNTSGFNATINVLTRAFDIARTQTQVEQPLCLECMRVLSDKLEKEVEDVTRDVEAYEACVQRLEGETQDVLSEADFLKEKKKIEEEERKLVAAIEETEKQNAEVNHQLKELEFKGNRFNELEDRYWQEFNNFQFQLIAHQEERDAILAKIEVSQAHLELLNKTNVLIDAFPIRNDGEFGTINNFRLGRLPAIKVEWDEINAAWGQACLLLHTMCNYFRPKFQCQVKIQPMGSYPRIVDSNNETYELFGPVNLFWSTRYDKAMTLYLMCLKDFADFANSKDQENNIPPDNCLNLPYKIEKDKVLGYSITQSFNKQESWTKALKYTLCNLKWALYWFVGNTNFQPLSATVSLPSNISAAGSLYAKRGPDSSKPSCKKT</sequence>
<feature type="chain" id="PRO_0000218558" description="Beclin-1-like protein">
    <location>
        <begin position="1"/>
        <end position="517"/>
    </location>
</feature>
<feature type="region of interest" description="Disordered" evidence="2">
    <location>
        <begin position="76"/>
        <end position="106"/>
    </location>
</feature>
<feature type="coiled-coil region" evidence="1">
    <location>
        <begin position="172"/>
        <end position="266"/>
    </location>
</feature>
<feature type="compositionally biased region" description="Polar residues" evidence="2">
    <location>
        <begin position="95"/>
        <end position="105"/>
    </location>
</feature>
<feature type="splice variant" id="VSP_057913" description="In isoform 3.">
    <location>
        <begin position="1"/>
        <end position="68"/>
    </location>
</feature>
<feature type="splice variant" id="VSP_057914" description="In isoform 2 and isoform 3.">
    <original>CQVKIQPMGSYPRIVDSNNETYE</original>
    <variation>YPYNYLTVLFLILPFLFDSVDCI</variation>
    <location>
        <begin position="364"/>
        <end position="386"/>
    </location>
</feature>
<feature type="splice variant" id="VSP_057915" description="In isoform 2 and isoform 3.">
    <location>
        <begin position="387"/>
        <end position="517"/>
    </location>
</feature>
<protein>
    <recommendedName>
        <fullName evidence="16">Beclin-1-like protein</fullName>
        <shortName evidence="14">AtBECLIN 1</shortName>
    </recommendedName>
    <alternativeName>
        <fullName evidence="15">Autophagy protein 6</fullName>
        <shortName evidence="14">AtATG6</shortName>
    </alternativeName>
    <alternativeName>
        <fullName evidence="14">Protein VPS30 homolog</fullName>
        <shortName evidence="14">AtVPS30</shortName>
    </alternativeName>
</protein>